<geneLocation type="mitochondrion"/>
<sequence>MLLIINNIINNDVPTPWGVYFQDSATPNHEGIIELHDNIMFYLVLILCLVSWLLFSIVKDGSKNPLPHKYLVHGQTIEIIWTILPALVLLVIAFPSFILLYLCDEVISPAMTIKAIGLQWYWKYEYSDFINDSGETIEFESYVIPEDLLEDGQLPLLDTDTSIVCPVNTHIRFIVSAADVIHDFAVPSLGIKIDACPGRLNQVSALIQREGVYYGQCSELCGVAHSAMPIKVEAVSLKEFLTWLNEQ</sequence>
<feature type="signal peptide" evidence="1">
    <location>
        <begin position="1"/>
        <end position="11"/>
    </location>
</feature>
<feature type="chain" id="PRO_0000006038" description="Cytochrome c oxidase subunit 2">
    <location>
        <begin position="12"/>
        <end position="247"/>
    </location>
</feature>
<feature type="topological domain" description="Mitochondrial intermembrane" evidence="3">
    <location>
        <begin position="12"/>
        <end position="38"/>
    </location>
</feature>
<feature type="transmembrane region" description="Helical" evidence="3">
    <location>
        <begin position="39"/>
        <end position="59"/>
    </location>
</feature>
<feature type="topological domain" description="Mitochondrial matrix" evidence="3">
    <location>
        <begin position="60"/>
        <end position="78"/>
    </location>
</feature>
<feature type="transmembrane region" description="Helical" evidence="3">
    <location>
        <begin position="79"/>
        <end position="101"/>
    </location>
</feature>
<feature type="topological domain" description="Mitochondrial intermembrane" evidence="3">
    <location>
        <begin position="102"/>
        <end position="247"/>
    </location>
</feature>
<feature type="binding site" evidence="2">
    <location>
        <position position="182"/>
    </location>
    <ligand>
        <name>Cu cation</name>
        <dbReference type="ChEBI" id="CHEBI:23378"/>
        <label>A1</label>
    </ligand>
</feature>
<feature type="binding site" evidence="2">
    <location>
        <position position="217"/>
    </location>
    <ligand>
        <name>Cu cation</name>
        <dbReference type="ChEBI" id="CHEBI:23378"/>
        <label>A1</label>
    </ligand>
</feature>
<feature type="binding site" evidence="2">
    <location>
        <position position="217"/>
    </location>
    <ligand>
        <name>Cu cation</name>
        <dbReference type="ChEBI" id="CHEBI:23378"/>
        <label>A2</label>
    </ligand>
</feature>
<feature type="binding site" evidence="2">
    <location>
        <position position="219"/>
    </location>
    <ligand>
        <name>Cu cation</name>
        <dbReference type="ChEBI" id="CHEBI:23378"/>
        <label>A2</label>
    </ligand>
</feature>
<feature type="binding site" evidence="2">
    <location>
        <position position="219"/>
    </location>
    <ligand>
        <name>Mg(2+)</name>
        <dbReference type="ChEBI" id="CHEBI:18420"/>
        <note>ligand shared with subunit 1</note>
    </ligand>
</feature>
<feature type="binding site" evidence="2">
    <location>
        <position position="221"/>
    </location>
    <ligand>
        <name>Cu cation</name>
        <dbReference type="ChEBI" id="CHEBI:23378"/>
        <label>A1</label>
    </ligand>
</feature>
<feature type="binding site" evidence="2">
    <location>
        <position position="221"/>
    </location>
    <ligand>
        <name>Cu cation</name>
        <dbReference type="ChEBI" id="CHEBI:23378"/>
        <label>A2</label>
    </ligand>
</feature>
<feature type="binding site" evidence="2">
    <location>
        <position position="225"/>
    </location>
    <ligand>
        <name>Cu cation</name>
        <dbReference type="ChEBI" id="CHEBI:23378"/>
        <label>A2</label>
    </ligand>
</feature>
<feature type="binding site" evidence="2">
    <location>
        <position position="228"/>
    </location>
    <ligand>
        <name>Cu cation</name>
        <dbReference type="ChEBI" id="CHEBI:23378"/>
        <label>A1</label>
    </ligand>
</feature>
<organism>
    <name type="scientific">Wickerhamomyces canadensis</name>
    <name type="common">Yeast</name>
    <name type="synonym">Pichia canadensis</name>
    <dbReference type="NCBI Taxonomy" id="1156965"/>
    <lineage>
        <taxon>Eukaryota</taxon>
        <taxon>Fungi</taxon>
        <taxon>Dikarya</taxon>
        <taxon>Ascomycota</taxon>
        <taxon>Saccharomycotina</taxon>
        <taxon>Saccharomycetes</taxon>
        <taxon>Phaffomycetales</taxon>
        <taxon>Wickerhamomycetaceae</taxon>
        <taxon>Wickerhamomyces</taxon>
    </lineage>
</organism>
<comment type="function">
    <text evidence="2">Component of the cytochrome c oxidase, the last enzyme in the mitochondrial electron transport chain which drives oxidative phosphorylation. The respiratory chain contains 3 multisubunit complexes succinate dehydrogenase (complex II, CII), ubiquinol-cytochrome c oxidoreductase (cytochrome b-c1 complex, complex III, CIII) and cytochrome c oxidase (complex IV, CIV), that cooperate to transfer electrons derived from NADH and succinate to molecular oxygen, creating an electrochemical gradient over the inner membrane that drives transmembrane transport and the ATP synthase. Cytochrome c oxidase is the component of the respiratory chain that catalyzes the reduction of oxygen to water. Electrons originating from reduced cytochrome c in the intermembrane space (IMS) are transferred via the dinuclear copper A center (CU(A)) of subunit 2 and heme A of subunit 1 to the active site in subunit 1, a binuclear center (BNC) formed by heme A3 and copper B (CU(B)). The BNC reduces molecular oxygen to 2 water molecules using 4 electrons from cytochrome c in the IMS and 4 protons from the mitochondrial matrix.</text>
</comment>
<comment type="catalytic activity">
    <reaction evidence="2">
        <text>4 Fe(II)-[cytochrome c] + O2 + 8 H(+)(in) = 4 Fe(III)-[cytochrome c] + 2 H2O + 4 H(+)(out)</text>
        <dbReference type="Rhea" id="RHEA:11436"/>
        <dbReference type="Rhea" id="RHEA-COMP:10350"/>
        <dbReference type="Rhea" id="RHEA-COMP:14399"/>
        <dbReference type="ChEBI" id="CHEBI:15377"/>
        <dbReference type="ChEBI" id="CHEBI:15378"/>
        <dbReference type="ChEBI" id="CHEBI:15379"/>
        <dbReference type="ChEBI" id="CHEBI:29033"/>
        <dbReference type="ChEBI" id="CHEBI:29034"/>
        <dbReference type="EC" id="7.1.1.9"/>
    </reaction>
    <physiologicalReaction direction="left-to-right" evidence="2">
        <dbReference type="Rhea" id="RHEA:11437"/>
    </physiologicalReaction>
</comment>
<comment type="cofactor">
    <cofactor evidence="2">
        <name>Cu cation</name>
        <dbReference type="ChEBI" id="CHEBI:23378"/>
    </cofactor>
    <text evidence="2">Binds a dinuclear copper A center per subunit.</text>
</comment>
<comment type="subunit">
    <text evidence="2">Component of the cytochrome c oxidase (complex IV, CIV), a multisubunit enzyme composed of a catalytic core of 3 subunits and several supernumerary subunits. The complex exists as a monomer or a dimer and forms supercomplexes (SCs) in the inner mitochondrial membrane with ubiquinol-cytochrome c oxidoreductase (cytochrome b-c1 complex, complex III, CIII).</text>
</comment>
<comment type="subcellular location">
    <subcellularLocation>
        <location evidence="2">Mitochondrion inner membrane</location>
        <topology evidence="2">Multi-pass membrane protein</topology>
    </subcellularLocation>
</comment>
<comment type="PTM">
    <text evidence="1">The signal sequence of COX2 is processed by IMP1.</text>
</comment>
<comment type="similarity">
    <text evidence="4">Belongs to the cytochrome c oxidase subunit 2 family.</text>
</comment>
<gene>
    <name type="primary">COX2</name>
</gene>
<keyword id="KW-0186">Copper</keyword>
<keyword id="KW-0249">Electron transport</keyword>
<keyword id="KW-0460">Magnesium</keyword>
<keyword id="KW-0472">Membrane</keyword>
<keyword id="KW-0479">Metal-binding</keyword>
<keyword id="KW-0496">Mitochondrion</keyword>
<keyword id="KW-0999">Mitochondrion inner membrane</keyword>
<keyword id="KW-0679">Respiratory chain</keyword>
<keyword id="KW-0732">Signal</keyword>
<keyword id="KW-1278">Translocase</keyword>
<keyword id="KW-0812">Transmembrane</keyword>
<keyword id="KW-1133">Transmembrane helix</keyword>
<keyword id="KW-0813">Transport</keyword>
<dbReference type="EC" id="7.1.1.9"/>
<dbReference type="EMBL" id="D31785">
    <property type="protein sequence ID" value="BAA06577.2"/>
    <property type="molecule type" value="Genomic_DNA"/>
</dbReference>
<dbReference type="PIR" id="S58754">
    <property type="entry name" value="S58754"/>
</dbReference>
<dbReference type="RefSeq" id="NP_038222.1">
    <property type="nucleotide sequence ID" value="NC_001762.1"/>
</dbReference>
<dbReference type="SMR" id="P48871"/>
<dbReference type="GeneID" id="800566"/>
<dbReference type="GO" id="GO:0005743">
    <property type="term" value="C:mitochondrial inner membrane"/>
    <property type="evidence" value="ECO:0007669"/>
    <property type="project" value="UniProtKB-SubCell"/>
</dbReference>
<dbReference type="GO" id="GO:0005507">
    <property type="term" value="F:copper ion binding"/>
    <property type="evidence" value="ECO:0007669"/>
    <property type="project" value="InterPro"/>
</dbReference>
<dbReference type="GO" id="GO:0004129">
    <property type="term" value="F:cytochrome-c oxidase activity"/>
    <property type="evidence" value="ECO:0007669"/>
    <property type="project" value="UniProtKB-EC"/>
</dbReference>
<dbReference type="GO" id="GO:0042773">
    <property type="term" value="P:ATP synthesis coupled electron transport"/>
    <property type="evidence" value="ECO:0007669"/>
    <property type="project" value="TreeGrafter"/>
</dbReference>
<dbReference type="CDD" id="cd13912">
    <property type="entry name" value="CcO_II_C"/>
    <property type="match status" value="1"/>
</dbReference>
<dbReference type="FunFam" id="1.10.287.90:FF:000004">
    <property type="entry name" value="Cytochrome c oxidase subunit 2"/>
    <property type="match status" value="1"/>
</dbReference>
<dbReference type="FunFam" id="2.60.40.420:FF:000001">
    <property type="entry name" value="Cytochrome c oxidase subunit 2"/>
    <property type="match status" value="1"/>
</dbReference>
<dbReference type="Gene3D" id="1.10.287.90">
    <property type="match status" value="1"/>
</dbReference>
<dbReference type="Gene3D" id="2.60.40.420">
    <property type="entry name" value="Cupredoxins - blue copper proteins"/>
    <property type="match status" value="1"/>
</dbReference>
<dbReference type="InterPro" id="IPR045187">
    <property type="entry name" value="CcO_II"/>
</dbReference>
<dbReference type="InterPro" id="IPR002429">
    <property type="entry name" value="CcO_II-like_C"/>
</dbReference>
<dbReference type="InterPro" id="IPR034210">
    <property type="entry name" value="CcO_II_C"/>
</dbReference>
<dbReference type="InterPro" id="IPR001505">
    <property type="entry name" value="Copper_CuA"/>
</dbReference>
<dbReference type="InterPro" id="IPR008972">
    <property type="entry name" value="Cupredoxin"/>
</dbReference>
<dbReference type="InterPro" id="IPR014222">
    <property type="entry name" value="Cyt_c_oxidase_su2"/>
</dbReference>
<dbReference type="InterPro" id="IPR011759">
    <property type="entry name" value="Cyt_c_oxidase_su2_TM_dom"/>
</dbReference>
<dbReference type="InterPro" id="IPR036257">
    <property type="entry name" value="Cyt_c_oxidase_su2_TM_sf"/>
</dbReference>
<dbReference type="NCBIfam" id="TIGR02866">
    <property type="entry name" value="CoxB"/>
    <property type="match status" value="1"/>
</dbReference>
<dbReference type="PANTHER" id="PTHR22888:SF9">
    <property type="entry name" value="CYTOCHROME C OXIDASE SUBUNIT 2"/>
    <property type="match status" value="1"/>
</dbReference>
<dbReference type="PANTHER" id="PTHR22888">
    <property type="entry name" value="CYTOCHROME C OXIDASE, SUBUNIT II"/>
    <property type="match status" value="1"/>
</dbReference>
<dbReference type="Pfam" id="PF00116">
    <property type="entry name" value="COX2"/>
    <property type="match status" value="1"/>
</dbReference>
<dbReference type="Pfam" id="PF02790">
    <property type="entry name" value="COX2_TM"/>
    <property type="match status" value="1"/>
</dbReference>
<dbReference type="PRINTS" id="PR01166">
    <property type="entry name" value="CYCOXIDASEII"/>
</dbReference>
<dbReference type="SUPFAM" id="SSF49503">
    <property type="entry name" value="Cupredoxins"/>
    <property type="match status" value="1"/>
</dbReference>
<dbReference type="SUPFAM" id="SSF81464">
    <property type="entry name" value="Cytochrome c oxidase subunit II-like, transmembrane region"/>
    <property type="match status" value="1"/>
</dbReference>
<dbReference type="PROSITE" id="PS00078">
    <property type="entry name" value="COX2"/>
    <property type="match status" value="1"/>
</dbReference>
<dbReference type="PROSITE" id="PS50857">
    <property type="entry name" value="COX2_CUA"/>
    <property type="match status" value="1"/>
</dbReference>
<dbReference type="PROSITE" id="PS50999">
    <property type="entry name" value="COX2_TM"/>
    <property type="match status" value="1"/>
</dbReference>
<evidence type="ECO:0000250" key="1"/>
<evidence type="ECO:0000250" key="2">
    <source>
        <dbReference type="UniProtKB" id="P00410"/>
    </source>
</evidence>
<evidence type="ECO:0000255" key="3"/>
<evidence type="ECO:0000305" key="4"/>
<name>COX2_WICCA</name>
<protein>
    <recommendedName>
        <fullName>Cytochrome c oxidase subunit 2</fullName>
        <ecNumber>7.1.1.9</ecNumber>
    </recommendedName>
    <alternativeName>
        <fullName>Cytochrome c oxidase polypeptide II</fullName>
    </alternativeName>
</protein>
<accession>P48871</accession>
<proteinExistence type="inferred from homology"/>
<reference key="1">
    <citation type="journal article" date="1995" name="Curr. Genet.">
        <title>The complete mitochondrial DNA sequence of Hansenula wingei reveals new characteristics of yeast mitochondria.</title>
        <authorList>
            <person name="Sekito T."/>
            <person name="Okamoto K."/>
            <person name="Kitano H."/>
            <person name="Yoshida K."/>
        </authorList>
    </citation>
    <scope>NUCLEOTIDE SEQUENCE [LARGE SCALE GENOMIC DNA]</scope>
    <source>
        <strain>21</strain>
    </source>
</reference>